<dbReference type="EMBL" id="AP006627">
    <property type="protein sequence ID" value="BAD64736.1"/>
    <property type="molecule type" value="Genomic_DNA"/>
</dbReference>
<dbReference type="SMR" id="Q5WFW9"/>
<dbReference type="STRING" id="66692.ABC2201"/>
<dbReference type="KEGG" id="bcl:ABC2201"/>
<dbReference type="eggNOG" id="COG1058">
    <property type="taxonomic scope" value="Bacteria"/>
</dbReference>
<dbReference type="eggNOG" id="COG1546">
    <property type="taxonomic scope" value="Bacteria"/>
</dbReference>
<dbReference type="HOGENOM" id="CLU_030805_9_3_9"/>
<dbReference type="OrthoDB" id="9801454at2"/>
<dbReference type="Proteomes" id="UP000001168">
    <property type="component" value="Chromosome"/>
</dbReference>
<dbReference type="CDD" id="cd00885">
    <property type="entry name" value="cinA"/>
    <property type="match status" value="1"/>
</dbReference>
<dbReference type="Gene3D" id="3.30.70.2860">
    <property type="match status" value="1"/>
</dbReference>
<dbReference type="Gene3D" id="3.90.950.20">
    <property type="entry name" value="CinA-like"/>
    <property type="match status" value="1"/>
</dbReference>
<dbReference type="Gene3D" id="3.40.980.10">
    <property type="entry name" value="MoaB/Mog-like domain"/>
    <property type="match status" value="1"/>
</dbReference>
<dbReference type="HAMAP" id="MF_00226_B">
    <property type="entry name" value="CinA_B"/>
    <property type="match status" value="1"/>
</dbReference>
<dbReference type="InterPro" id="IPR050101">
    <property type="entry name" value="CinA"/>
</dbReference>
<dbReference type="InterPro" id="IPR036653">
    <property type="entry name" value="CinA-like_C"/>
</dbReference>
<dbReference type="InterPro" id="IPR008136">
    <property type="entry name" value="CinA_C"/>
</dbReference>
<dbReference type="InterPro" id="IPR041424">
    <property type="entry name" value="CinA_KH"/>
</dbReference>
<dbReference type="InterPro" id="IPR008135">
    <property type="entry name" value="Competence-induced_CinA"/>
</dbReference>
<dbReference type="InterPro" id="IPR036425">
    <property type="entry name" value="MoaB/Mog-like_dom_sf"/>
</dbReference>
<dbReference type="InterPro" id="IPR001453">
    <property type="entry name" value="MoaB/Mog_dom"/>
</dbReference>
<dbReference type="NCBIfam" id="TIGR00200">
    <property type="entry name" value="cinA_nterm"/>
    <property type="match status" value="1"/>
</dbReference>
<dbReference type="NCBIfam" id="TIGR00177">
    <property type="entry name" value="molyb_syn"/>
    <property type="match status" value="1"/>
</dbReference>
<dbReference type="NCBIfam" id="TIGR00199">
    <property type="entry name" value="PncC_domain"/>
    <property type="match status" value="1"/>
</dbReference>
<dbReference type="NCBIfam" id="NF001813">
    <property type="entry name" value="PRK00549.1"/>
    <property type="match status" value="1"/>
</dbReference>
<dbReference type="PANTHER" id="PTHR13939">
    <property type="entry name" value="NICOTINAMIDE-NUCLEOTIDE AMIDOHYDROLASE PNCC"/>
    <property type="match status" value="1"/>
</dbReference>
<dbReference type="PANTHER" id="PTHR13939:SF0">
    <property type="entry name" value="NMN AMIDOHYDROLASE-LIKE PROTEIN YFAY"/>
    <property type="match status" value="1"/>
</dbReference>
<dbReference type="Pfam" id="PF02464">
    <property type="entry name" value="CinA"/>
    <property type="match status" value="1"/>
</dbReference>
<dbReference type="Pfam" id="PF18146">
    <property type="entry name" value="CinA_KH"/>
    <property type="match status" value="1"/>
</dbReference>
<dbReference type="Pfam" id="PF00994">
    <property type="entry name" value="MoCF_biosynth"/>
    <property type="match status" value="1"/>
</dbReference>
<dbReference type="PIRSF" id="PIRSF006728">
    <property type="entry name" value="CinA"/>
    <property type="match status" value="1"/>
</dbReference>
<dbReference type="SMART" id="SM00852">
    <property type="entry name" value="MoCF_biosynth"/>
    <property type="match status" value="1"/>
</dbReference>
<dbReference type="SUPFAM" id="SSF142433">
    <property type="entry name" value="CinA-like"/>
    <property type="match status" value="1"/>
</dbReference>
<dbReference type="SUPFAM" id="SSF53218">
    <property type="entry name" value="Molybdenum cofactor biosynthesis proteins"/>
    <property type="match status" value="1"/>
</dbReference>
<evidence type="ECO:0000255" key="1">
    <source>
        <dbReference type="HAMAP-Rule" id="MF_00226"/>
    </source>
</evidence>
<sequence>MNAEIMAVGSELLLGQIANTNGQFISKQLASIGVDVYRHTVVGDNEDRLKIALQEAYERADLVILTGGLGPTKDDLTKETVAAFCGKRLVYDENALHEIEDYFKRHNRVMTPNNKKQAYVIEGCTVLANRHGMAPGMLCELEDGKKLALLPGPPSEMKPMFVNELLPKLLGATEQTEITSRVLHFFGIGESQLETDLLDLIATQTNPTIAPLAGDGEVKLRLTVKHADKNEAARLLDETETLIRKRVGSYLYGYNETTLVKETFLRLQASGLTIASAESLTAGLFSSELAAFAGASHVLKGSVTAYSNELKQQLLQVSSATLASDGAISEACALEMARGVKTLYGSDIAISFTGVAGPGVQEGHEAGTVFLALLLPGGKERVYTLSLSGGRNAVRMRAVKFGYFYLLEELKRSNGSK</sequence>
<proteinExistence type="inferred from homology"/>
<accession>Q5WFW9</accession>
<feature type="chain" id="PRO_0000156752" description="Putative competence-damage inducible protein">
    <location>
        <begin position="1"/>
        <end position="417"/>
    </location>
</feature>
<protein>
    <recommendedName>
        <fullName evidence="1">Putative competence-damage inducible protein</fullName>
    </recommendedName>
</protein>
<name>CINA_SHOC1</name>
<reference key="1">
    <citation type="submission" date="2003-10" db="EMBL/GenBank/DDBJ databases">
        <title>The complete genome sequence of the alkaliphilic Bacillus clausii KSM-K16.</title>
        <authorList>
            <person name="Takaki Y."/>
            <person name="Kageyama Y."/>
            <person name="Shimamura S."/>
            <person name="Suzuki H."/>
            <person name="Nishi S."/>
            <person name="Hatada Y."/>
            <person name="Kawai S."/>
            <person name="Ito S."/>
            <person name="Horikoshi K."/>
        </authorList>
    </citation>
    <scope>NUCLEOTIDE SEQUENCE [LARGE SCALE GENOMIC DNA]</scope>
    <source>
        <strain>KSM-K16</strain>
    </source>
</reference>
<gene>
    <name evidence="1" type="primary">cinA</name>
    <name type="ordered locus">ABC2201</name>
</gene>
<keyword id="KW-1185">Reference proteome</keyword>
<comment type="similarity">
    <text evidence="1">Belongs to the CinA family.</text>
</comment>
<organism>
    <name type="scientific">Shouchella clausii (strain KSM-K16)</name>
    <name type="common">Alkalihalobacillus clausii</name>
    <dbReference type="NCBI Taxonomy" id="66692"/>
    <lineage>
        <taxon>Bacteria</taxon>
        <taxon>Bacillati</taxon>
        <taxon>Bacillota</taxon>
        <taxon>Bacilli</taxon>
        <taxon>Bacillales</taxon>
        <taxon>Bacillaceae</taxon>
        <taxon>Shouchella</taxon>
    </lineage>
</organism>